<gene>
    <name evidence="6" type="primary">CPS5</name>
    <name evidence="7" type="synonym">TPS1</name>
</gene>
<protein>
    <recommendedName>
        <fullName evidence="6">Ent-copalyl diphosphate synthase 5</fullName>
        <ecNumber evidence="4 5">5.5.1.13</ecNumber>
    </recommendedName>
    <alternativeName>
        <fullName evidence="7">Putative ent-copalyl diphosphate synthase</fullName>
        <shortName evidence="7">IrTPS1</shortName>
    </alternativeName>
</protein>
<feature type="chain" id="PRO_0000452376" description="Ent-copalyl diphosphate synthase 5">
    <location>
        <begin position="1" status="less than"/>
        <end position="664" status="greater than"/>
    </location>
</feature>
<feature type="short sequence motif" description="DXDD motif" evidence="8">
    <location>
        <begin position="233"/>
        <end position="236"/>
    </location>
</feature>
<feature type="binding site" evidence="2">
    <location>
        <position position="101"/>
    </location>
    <ligand>
        <name>substrate</name>
    </ligand>
</feature>
<feature type="binding site" evidence="1">
    <location>
        <position position="233"/>
    </location>
    <ligand>
        <name>Mg(2+)</name>
        <dbReference type="ChEBI" id="CHEBI:18420"/>
    </ligand>
</feature>
<feature type="binding site" evidence="1">
    <location>
        <position position="235"/>
    </location>
    <ligand>
        <name>Mg(2+)</name>
        <dbReference type="ChEBI" id="CHEBI:18420"/>
    </ligand>
</feature>
<feature type="binding site" evidence="2">
    <location>
        <position position="320"/>
    </location>
    <ligand>
        <name>substrate</name>
    </ligand>
</feature>
<feature type="sequence conflict" description="In Ref. 1; ARO38144." evidence="8" ref="1">
    <original>K</original>
    <variation>N</variation>
    <location>
        <position position="314"/>
    </location>
</feature>
<feature type="non-terminal residue" evidence="8">
    <location>
        <position position="1"/>
    </location>
</feature>
<feature type="non-terminal residue" evidence="8">
    <location>
        <position position="664"/>
    </location>
</feature>
<reference key="1">
    <citation type="journal article" date="2017" name="PLoS ONE">
        <title>Biosynthesis of the oxygenated diterpene nezukol in the medicinal plant Isodon rubescens is catalyzed by a pair of diterpene synthases.</title>
        <authorList>
            <person name="Pelot K.A."/>
            <person name="Hagelthorn L.M."/>
            <person name="Addison J.B."/>
            <person name="Zerbe P."/>
        </authorList>
    </citation>
    <scope>NUCLEOTIDE SEQUENCE [MRNA] OF 1-357</scope>
    <scope>FUNCTION</scope>
    <scope>PATHWAY</scope>
    <scope>CATALYTIC ACTIVITY</scope>
</reference>
<reference key="2">
    <citation type="journal article" date="2017" name="Plant Physiol.">
        <title>Functional diversification of kaurene synthase-like genes in Isodon rubescens.</title>
        <authorList>
            <person name="Jin B."/>
            <person name="Cui G."/>
            <person name="Guo J."/>
            <person name="Tang J."/>
            <person name="Duan L."/>
            <person name="Lin H."/>
            <person name="Shen Y."/>
            <person name="Chen T."/>
            <person name="Zhang H."/>
            <person name="Huang L."/>
        </authorList>
    </citation>
    <scope>NUCLEOTIDE SEQUENCE [MRNA] OF 24-664</scope>
    <scope>FUNCTION</scope>
    <scope>PATHWAY</scope>
    <scope>CATALYTIC ACTIVITY</scope>
    <scope>TISSUE SPECIFICITY</scope>
</reference>
<keyword id="KW-0150">Chloroplast</keyword>
<keyword id="KW-0413">Isomerase</keyword>
<keyword id="KW-0460">Magnesium</keyword>
<keyword id="KW-0479">Metal-binding</keyword>
<keyword id="KW-0934">Plastid</keyword>
<evidence type="ECO:0000250" key="1">
    <source>
        <dbReference type="UniProtKB" id="C7BKP9"/>
    </source>
</evidence>
<evidence type="ECO:0000250" key="2">
    <source>
        <dbReference type="UniProtKB" id="Q38802"/>
    </source>
</evidence>
<evidence type="ECO:0000250" key="3">
    <source>
        <dbReference type="UniProtKB" id="Q40577"/>
    </source>
</evidence>
<evidence type="ECO:0000269" key="4">
    <source>
    </source>
</evidence>
<evidence type="ECO:0000269" key="5">
    <source>
    </source>
</evidence>
<evidence type="ECO:0000303" key="6">
    <source>
    </source>
</evidence>
<evidence type="ECO:0000303" key="7">
    <source>
    </source>
</evidence>
<evidence type="ECO:0000305" key="8"/>
<comment type="function">
    <text evidence="4">Involved in the biosynthesis of ent-kaurene diterpenoids natural products such as oridonin, miltiradiene, eriocalyxin B and nezukol, known to exhibit antitumor, anti-inflammatory and antibacterial activities (PubMed:28381502). Catalyzes the conversion of (2E,6E,10E)-geranylgeranyl diphosphate (GGPP) to ent-copalyl diphosphate (ent-CPP) (PubMed:28381502).</text>
</comment>
<comment type="catalytic activity">
    <reaction evidence="4 5">
        <text>(2E,6E,10E)-geranylgeranyl diphosphate = ent-copalyl diphosphate</text>
        <dbReference type="Rhea" id="RHEA:14841"/>
        <dbReference type="ChEBI" id="CHEBI:58553"/>
        <dbReference type="ChEBI" id="CHEBI:58756"/>
        <dbReference type="EC" id="5.5.1.13"/>
    </reaction>
    <physiologicalReaction direction="left-to-right" evidence="4 5">
        <dbReference type="Rhea" id="RHEA:14842"/>
    </physiologicalReaction>
</comment>
<comment type="cofactor">
    <cofactor evidence="3">
        <name>Mg(2+)</name>
        <dbReference type="ChEBI" id="CHEBI:18420"/>
    </cofactor>
</comment>
<comment type="pathway">
    <text evidence="4 5">Secondary metabolite biosynthesis; terpenoid biosynthesis.</text>
</comment>
<comment type="subcellular location">
    <subcellularLocation>
        <location evidence="8">Plastid</location>
        <location evidence="8">Chloroplast</location>
    </subcellularLocation>
</comment>
<comment type="tissue specificity">
    <text evidence="4">Ubiquitous expression in roots, stems, leaves and flowers.</text>
</comment>
<comment type="domain">
    <text evidence="8">The Asp-Xaa-Asp-Asp (DXDD) motif is important for the catalytic activity, presumably through binding to Mg(2+).</text>
</comment>
<comment type="miscellaneous">
    <text evidence="4">Abietane diterpenoids (e.g. miltiradiene, abietatriene and ferruginol) accumulate specifically in the periderm of roots (PubMed:28381502). The ent-kaurene diterpenoid oridonin, main constituent of Isodon rubescens, accumulates in leaves (PubMed:28381502).</text>
</comment>
<comment type="similarity">
    <text evidence="8">Belongs to the terpene synthase family. Tpsc subfamily.</text>
</comment>
<sequence>NQLADGSWGDAGTFSIFDRILNTLACVVALRSWNIHPHKTDKGIWFMKKNMCRIDEENLEHMPIGFEVALPSLIDIAKKLEIDIPTQTRGLQEIYARREIKLKKIPRDIMHQVPTTLLHSLEGMAGLKWEKLLKLQSEDGSFLFSPSSTAFALQQTRDHNCLKYLTNHIHKFNGGVPNVYPVDLFEHLWAVDRLQRLGLSRYFEPEIEECIAYVHRQWTEKGICWARNSQVEDIDDTAMGFRLLRLHGYEVSADVFRHFKSDGGEFFCFKGQSTQAVTGMYNLYRASQLMFPGENILVDAARFSANFLQLKRAKNDLLDKWIITKDLPGEVGYALDVPWYASLPRVETRFYLDQYGGDDDVWIGKTLYRMPYVNNNKYLELAKLDYNNCQALHQQEWQNILKWYRSCSLGEFGMTERSLLQTYYVAAASVFEPEKSQERLAWAKTAILMETITSHFEFQQLSRDQKRAFITEFEHDSILKYTNGGRYKRRSSLVGTLVRTLNHLSLDILLAHGRDIHQPLKNAWCKWLNSWEEGGDAELLVRTLNLMSGGGRRRRWASEELLSSNPKHEQLLKATIGVCDKLRLFLRRKVQGGNGCMNATGMTTVEIESEMRELVKLVVTRSSSEDLDSEIKQNFLTIARSFYYAAYCNQGTINFHIAKVLFEK</sequence>
<dbReference type="EC" id="5.5.1.13" evidence="4 5"/>
<dbReference type="EMBL" id="KY661361">
    <property type="protein sequence ID" value="ARO38144.1"/>
    <property type="molecule type" value="mRNA"/>
</dbReference>
<dbReference type="EMBL" id="KU180503">
    <property type="protein sequence ID" value="APJ36375.1"/>
    <property type="molecule type" value="mRNA"/>
</dbReference>
<dbReference type="SMR" id="A0A1X9ISN9"/>
<dbReference type="UniPathway" id="UPA00213"/>
<dbReference type="GO" id="GO:0009507">
    <property type="term" value="C:chloroplast"/>
    <property type="evidence" value="ECO:0007669"/>
    <property type="project" value="UniProtKB-SubCell"/>
</dbReference>
<dbReference type="GO" id="GO:0009905">
    <property type="term" value="F:ent-copalyl diphosphate synthase activity"/>
    <property type="evidence" value="ECO:0000314"/>
    <property type="project" value="UniProtKB"/>
</dbReference>
<dbReference type="GO" id="GO:0000287">
    <property type="term" value="F:magnesium ion binding"/>
    <property type="evidence" value="ECO:0007669"/>
    <property type="project" value="TreeGrafter"/>
</dbReference>
<dbReference type="GO" id="GO:0010333">
    <property type="term" value="F:terpene synthase activity"/>
    <property type="evidence" value="ECO:0007669"/>
    <property type="project" value="InterPro"/>
</dbReference>
<dbReference type="GO" id="GO:0009686">
    <property type="term" value="P:gibberellin biosynthetic process"/>
    <property type="evidence" value="ECO:0007669"/>
    <property type="project" value="TreeGrafter"/>
</dbReference>
<dbReference type="GO" id="GO:1901946">
    <property type="term" value="P:miltiradiene biosynthetic process"/>
    <property type="evidence" value="ECO:0000314"/>
    <property type="project" value="UniProtKB"/>
</dbReference>
<dbReference type="GO" id="GO:0016114">
    <property type="term" value="P:terpenoid biosynthetic process"/>
    <property type="evidence" value="ECO:0000314"/>
    <property type="project" value="UniProtKB"/>
</dbReference>
<dbReference type="FunFam" id="1.50.10.130:FF:000002">
    <property type="entry name" value="Ent-copalyl diphosphate synthase, chloroplastic"/>
    <property type="match status" value="1"/>
</dbReference>
<dbReference type="Gene3D" id="1.50.10.160">
    <property type="match status" value="1"/>
</dbReference>
<dbReference type="Gene3D" id="1.10.600.10">
    <property type="entry name" value="Farnesyl Diphosphate Synthase"/>
    <property type="match status" value="1"/>
</dbReference>
<dbReference type="Gene3D" id="1.50.10.130">
    <property type="entry name" value="Terpene synthase, N-terminal domain"/>
    <property type="match status" value="1"/>
</dbReference>
<dbReference type="InterPro" id="IPR008949">
    <property type="entry name" value="Isoprenoid_synthase_dom_sf"/>
</dbReference>
<dbReference type="InterPro" id="IPR001906">
    <property type="entry name" value="Terpene_synth_N"/>
</dbReference>
<dbReference type="InterPro" id="IPR036965">
    <property type="entry name" value="Terpene_synth_N_sf"/>
</dbReference>
<dbReference type="InterPro" id="IPR050148">
    <property type="entry name" value="Terpene_synthase-like"/>
</dbReference>
<dbReference type="InterPro" id="IPR008930">
    <property type="entry name" value="Terpenoid_cyclase/PrenylTrfase"/>
</dbReference>
<dbReference type="PANTHER" id="PTHR31739">
    <property type="entry name" value="ENT-COPALYL DIPHOSPHATE SYNTHASE, CHLOROPLASTIC"/>
    <property type="match status" value="1"/>
</dbReference>
<dbReference type="PANTHER" id="PTHR31739:SF4">
    <property type="entry name" value="ENT-COPALYL DIPHOSPHATE SYNTHASE, CHLOROPLASTIC"/>
    <property type="match status" value="1"/>
</dbReference>
<dbReference type="Pfam" id="PF01397">
    <property type="entry name" value="Terpene_synth"/>
    <property type="match status" value="1"/>
</dbReference>
<dbReference type="SFLD" id="SFLDG01014">
    <property type="entry name" value="Terpene_Cyclase_Like_1_N-term"/>
    <property type="match status" value="1"/>
</dbReference>
<dbReference type="SFLD" id="SFLDG01605">
    <property type="entry name" value="Terpene_Cyclase_Like_1_N-term"/>
    <property type="match status" value="1"/>
</dbReference>
<dbReference type="SUPFAM" id="SSF48239">
    <property type="entry name" value="Terpenoid cyclases/Protein prenyltransferases"/>
    <property type="match status" value="1"/>
</dbReference>
<dbReference type="SUPFAM" id="SSF48576">
    <property type="entry name" value="Terpenoid synthases"/>
    <property type="match status" value="1"/>
</dbReference>
<accession>A0A1X9ISN9</accession>
<accession>A0A1W6QDI5</accession>
<organism>
    <name type="scientific">Isodon rubescens</name>
    <name type="common">Rabdosia rubescens</name>
    <dbReference type="NCBI Taxonomy" id="587669"/>
    <lineage>
        <taxon>Eukaryota</taxon>
        <taxon>Viridiplantae</taxon>
        <taxon>Streptophyta</taxon>
        <taxon>Embryophyta</taxon>
        <taxon>Tracheophyta</taxon>
        <taxon>Spermatophyta</taxon>
        <taxon>Magnoliopsida</taxon>
        <taxon>eudicotyledons</taxon>
        <taxon>Gunneridae</taxon>
        <taxon>Pentapetalae</taxon>
        <taxon>asterids</taxon>
        <taxon>lamiids</taxon>
        <taxon>Lamiales</taxon>
        <taxon>Lamiaceae</taxon>
        <taxon>Nepetoideae</taxon>
        <taxon>Ocimeae</taxon>
        <taxon>Isodoninae</taxon>
        <taxon>Isodon</taxon>
    </lineage>
</organism>
<name>CPS5_ISORU</name>
<proteinExistence type="evidence at protein level"/>